<gene>
    <name evidence="1" type="primary">panC</name>
    <name type="ordered locus">cbdbA782</name>
</gene>
<name>PANC_DEHMC</name>
<feature type="chain" id="PRO_0000305436" description="Pantothenate synthetase">
    <location>
        <begin position="1"/>
        <end position="268"/>
    </location>
</feature>
<feature type="active site" description="Proton donor" evidence="1">
    <location>
        <position position="25"/>
    </location>
</feature>
<feature type="binding site" evidence="1">
    <location>
        <begin position="18"/>
        <end position="25"/>
    </location>
    <ligand>
        <name>ATP</name>
        <dbReference type="ChEBI" id="CHEBI:30616"/>
    </ligand>
</feature>
<feature type="binding site" evidence="1">
    <location>
        <position position="49"/>
    </location>
    <ligand>
        <name>(R)-pantoate</name>
        <dbReference type="ChEBI" id="CHEBI:15980"/>
    </ligand>
</feature>
<feature type="binding site" evidence="1">
    <location>
        <position position="49"/>
    </location>
    <ligand>
        <name>beta-alanine</name>
        <dbReference type="ChEBI" id="CHEBI:57966"/>
    </ligand>
</feature>
<feature type="binding site" evidence="1">
    <location>
        <begin position="135"/>
        <end position="138"/>
    </location>
    <ligand>
        <name>ATP</name>
        <dbReference type="ChEBI" id="CHEBI:30616"/>
    </ligand>
</feature>
<feature type="binding site" evidence="1">
    <location>
        <position position="141"/>
    </location>
    <ligand>
        <name>(R)-pantoate</name>
        <dbReference type="ChEBI" id="CHEBI:15980"/>
    </ligand>
</feature>
<feature type="binding site" evidence="1">
    <location>
        <position position="164"/>
    </location>
    <ligand>
        <name>ATP</name>
        <dbReference type="ChEBI" id="CHEBI:30616"/>
    </ligand>
</feature>
<feature type="binding site" evidence="1">
    <location>
        <begin position="172"/>
        <end position="175"/>
    </location>
    <ligand>
        <name>ATP</name>
        <dbReference type="ChEBI" id="CHEBI:30616"/>
    </ligand>
</feature>
<protein>
    <recommendedName>
        <fullName evidence="1">Pantothenate synthetase</fullName>
        <shortName evidence="1">PS</shortName>
        <ecNumber evidence="1">6.3.2.1</ecNumber>
    </recommendedName>
    <alternativeName>
        <fullName evidence="1">Pantoate--beta-alanine ligase</fullName>
    </alternativeName>
    <alternativeName>
        <fullName evidence="1">Pantoate-activating enzyme</fullName>
    </alternativeName>
</protein>
<sequence>MKKLHREICGPVGLVPTMGYLHEGHLSLVRASKKQDINTVASIFVNPTQFGPHEDFKKYPRDEKRDMAMLENTGVDYVFVPSVEDMYPAGFDSWVEPGILQQCLEGAVRPGHFRGVCTVVAKLFTIIRPDRAYFGQKDYQQYLIIKRMASDLNLDVSVEMLPIIRENDGLALSSRNTYLSPAERQAALVLYRSLLTARSLFDEKEHRAEVIRKKMTDVIQHESMAEIDYVSLSHQDTLCESDEVSAKTIALVAARFGKTRLIDNMFLA</sequence>
<proteinExistence type="inferred from homology"/>
<accession>Q3ZXF9</accession>
<comment type="function">
    <text evidence="1">Catalyzes the condensation of pantoate with beta-alanine in an ATP-dependent reaction via a pantoyl-adenylate intermediate.</text>
</comment>
<comment type="catalytic activity">
    <reaction evidence="1">
        <text>(R)-pantoate + beta-alanine + ATP = (R)-pantothenate + AMP + diphosphate + H(+)</text>
        <dbReference type="Rhea" id="RHEA:10912"/>
        <dbReference type="ChEBI" id="CHEBI:15378"/>
        <dbReference type="ChEBI" id="CHEBI:15980"/>
        <dbReference type="ChEBI" id="CHEBI:29032"/>
        <dbReference type="ChEBI" id="CHEBI:30616"/>
        <dbReference type="ChEBI" id="CHEBI:33019"/>
        <dbReference type="ChEBI" id="CHEBI:57966"/>
        <dbReference type="ChEBI" id="CHEBI:456215"/>
        <dbReference type="EC" id="6.3.2.1"/>
    </reaction>
</comment>
<comment type="pathway">
    <text evidence="1">Cofactor biosynthesis; (R)-pantothenate biosynthesis; (R)-pantothenate from (R)-pantoate and beta-alanine: step 1/1.</text>
</comment>
<comment type="subunit">
    <text evidence="1">Homodimer.</text>
</comment>
<comment type="subcellular location">
    <subcellularLocation>
        <location evidence="1">Cytoplasm</location>
    </subcellularLocation>
</comment>
<comment type="miscellaneous">
    <text evidence="1">The reaction proceeds by a bi uni uni bi ping pong mechanism.</text>
</comment>
<comment type="similarity">
    <text evidence="1">Belongs to the pantothenate synthetase family.</text>
</comment>
<organism>
    <name type="scientific">Dehalococcoides mccartyi (strain CBDB1)</name>
    <dbReference type="NCBI Taxonomy" id="255470"/>
    <lineage>
        <taxon>Bacteria</taxon>
        <taxon>Bacillati</taxon>
        <taxon>Chloroflexota</taxon>
        <taxon>Dehalococcoidia</taxon>
        <taxon>Dehalococcoidales</taxon>
        <taxon>Dehalococcoidaceae</taxon>
        <taxon>Dehalococcoides</taxon>
    </lineage>
</organism>
<dbReference type="EC" id="6.3.2.1" evidence="1"/>
<dbReference type="EMBL" id="AJ965256">
    <property type="protein sequence ID" value="CAI82936.1"/>
    <property type="molecule type" value="Genomic_DNA"/>
</dbReference>
<dbReference type="SMR" id="Q3ZXF9"/>
<dbReference type="KEGG" id="deh:cbdbA782"/>
<dbReference type="HOGENOM" id="CLU_047148_0_0_0"/>
<dbReference type="UniPathway" id="UPA00028">
    <property type="reaction ID" value="UER00005"/>
</dbReference>
<dbReference type="Proteomes" id="UP000000433">
    <property type="component" value="Chromosome"/>
</dbReference>
<dbReference type="GO" id="GO:0005829">
    <property type="term" value="C:cytosol"/>
    <property type="evidence" value="ECO:0007669"/>
    <property type="project" value="TreeGrafter"/>
</dbReference>
<dbReference type="GO" id="GO:0005524">
    <property type="term" value="F:ATP binding"/>
    <property type="evidence" value="ECO:0007669"/>
    <property type="project" value="UniProtKB-KW"/>
</dbReference>
<dbReference type="GO" id="GO:0004592">
    <property type="term" value="F:pantoate-beta-alanine ligase activity"/>
    <property type="evidence" value="ECO:0007669"/>
    <property type="project" value="UniProtKB-UniRule"/>
</dbReference>
<dbReference type="GO" id="GO:0015940">
    <property type="term" value="P:pantothenate biosynthetic process"/>
    <property type="evidence" value="ECO:0007669"/>
    <property type="project" value="UniProtKB-UniRule"/>
</dbReference>
<dbReference type="CDD" id="cd00560">
    <property type="entry name" value="PanC"/>
    <property type="match status" value="1"/>
</dbReference>
<dbReference type="FunFam" id="3.30.1300.10:FF:000001">
    <property type="entry name" value="Pantothenate synthetase"/>
    <property type="match status" value="1"/>
</dbReference>
<dbReference type="FunFam" id="3.40.50.620:FF:000114">
    <property type="entry name" value="Pantothenate synthetase"/>
    <property type="match status" value="1"/>
</dbReference>
<dbReference type="Gene3D" id="3.40.50.620">
    <property type="entry name" value="HUPs"/>
    <property type="match status" value="1"/>
</dbReference>
<dbReference type="Gene3D" id="3.30.1300.10">
    <property type="entry name" value="Pantoate-beta-alanine ligase, C-terminal domain"/>
    <property type="match status" value="1"/>
</dbReference>
<dbReference type="HAMAP" id="MF_00158">
    <property type="entry name" value="PanC"/>
    <property type="match status" value="1"/>
</dbReference>
<dbReference type="InterPro" id="IPR003721">
    <property type="entry name" value="Pantoate_ligase"/>
</dbReference>
<dbReference type="InterPro" id="IPR042176">
    <property type="entry name" value="Pantoate_ligase_C"/>
</dbReference>
<dbReference type="InterPro" id="IPR014729">
    <property type="entry name" value="Rossmann-like_a/b/a_fold"/>
</dbReference>
<dbReference type="NCBIfam" id="TIGR00018">
    <property type="entry name" value="panC"/>
    <property type="match status" value="1"/>
</dbReference>
<dbReference type="PANTHER" id="PTHR21299">
    <property type="entry name" value="CYTIDYLATE KINASE/PANTOATE-BETA-ALANINE LIGASE"/>
    <property type="match status" value="1"/>
</dbReference>
<dbReference type="PANTHER" id="PTHR21299:SF1">
    <property type="entry name" value="PANTOATE--BETA-ALANINE LIGASE"/>
    <property type="match status" value="1"/>
</dbReference>
<dbReference type="Pfam" id="PF02569">
    <property type="entry name" value="Pantoate_ligase"/>
    <property type="match status" value="1"/>
</dbReference>
<dbReference type="SUPFAM" id="SSF52374">
    <property type="entry name" value="Nucleotidylyl transferase"/>
    <property type="match status" value="1"/>
</dbReference>
<keyword id="KW-0067">ATP-binding</keyword>
<keyword id="KW-0963">Cytoplasm</keyword>
<keyword id="KW-0436">Ligase</keyword>
<keyword id="KW-0547">Nucleotide-binding</keyword>
<keyword id="KW-0566">Pantothenate biosynthesis</keyword>
<reference key="1">
    <citation type="journal article" date="2005" name="Nat. Biotechnol.">
        <title>Genome sequence of the chlorinated compound-respiring bacterium Dehalococcoides species strain CBDB1.</title>
        <authorList>
            <person name="Kube M."/>
            <person name="Beck A."/>
            <person name="Zinder S.H."/>
            <person name="Kuhl H."/>
            <person name="Reinhardt R."/>
            <person name="Adrian L."/>
        </authorList>
    </citation>
    <scope>NUCLEOTIDE SEQUENCE [LARGE SCALE GENOMIC DNA]</scope>
    <source>
        <strain>CBDB1</strain>
    </source>
</reference>
<evidence type="ECO:0000255" key="1">
    <source>
        <dbReference type="HAMAP-Rule" id="MF_00158"/>
    </source>
</evidence>